<proteinExistence type="inferred from homology"/>
<sequence length="426" mass="46230">MELAQTLSQRQTMQMAGQMLHSLAILGMSSQDLSEHLTEQATSNPFLTYRAPPAFIARGGEDFDAVGAVAAHKPSLMAHVVDQIEMAFTETPDRLLALRFAEALEPSGWLGQSLDSIALAAGVSLSRAESMLAVLQGFEPTGLFARDLSDCLILQAREADILTWEVETLIRNIRLIAENRLSDLADLCDCDIGDIPEIIKQIRHLNPKPGLAFDHQPTPVFPPDLIAVRGAEGWTVELNRATSPTITVREDRFADGTADAKARAERRRRGRGPGAGEALERRGDTLLRTAAVLVARQSAFLDKGPAHLVPLTLEDVASELGLHASTISRAVSGRMIQTQTRALPLRAFFSRAVSTQGGGEAVSRDSLDFVQRTVGGEDRQNPLSDDAIVTLAERAGLRIARRTVAKYRSTLGLASSYERRRAAAAR</sequence>
<protein>
    <recommendedName>
        <fullName>RNA polymerase sigma-54 factor</fullName>
    </recommendedName>
</protein>
<evidence type="ECO:0000255" key="1"/>
<evidence type="ECO:0000256" key="2">
    <source>
        <dbReference type="SAM" id="MobiDB-lite"/>
    </source>
</evidence>
<evidence type="ECO:0000305" key="3"/>
<reference key="1">
    <citation type="journal article" date="1989" name="Nucleic Acids Res.">
        <title>Nucleotide sequence of wild-type and mutant nifR4 (ntrA) genes of Rhodobacter capsulatus: identification of an essential glycine residue.</title>
        <authorList>
            <person name="Alais A."/>
            <person name="Cejudo F.J."/>
            <person name="Chabert J."/>
            <person name="Willison J.C."/>
            <person name="Vignais P.M."/>
        </authorList>
    </citation>
    <scope>NUCLEOTIDE SEQUENCE [GENOMIC DNA]</scope>
    <source>
        <strain>ATCC 33303 / B10</strain>
    </source>
</reference>
<reference key="2">
    <citation type="journal article" date="1992" name="Mol. Microbiol.">
        <title>Mapping and characterization of the promoter elements of the regulatory nif genes rpoN, nifA1 and nifA2 in Rhodobacter capsulatus.</title>
        <authorList>
            <person name="Preker P."/>
            <person name="Huebner P."/>
            <person name="Schmehl M."/>
            <person name="Klipp W."/>
            <person name="Bickle T.A."/>
        </authorList>
    </citation>
    <scope>NUCLEOTIDE SEQUENCE [GENOMIC DNA] OF 1-10</scope>
    <source>
        <strain>B10S</strain>
    </source>
</reference>
<gene>
    <name type="primary">rpoN</name>
    <name type="synonym">nifR4</name>
    <name type="synonym">ntrA</name>
</gene>
<accession>P0CY59</accession>
<accession>P09433</accession>
<dbReference type="EMBL" id="X15437">
    <property type="protein sequence ID" value="CAA33477.1"/>
    <property type="molecule type" value="Genomic_DNA"/>
</dbReference>
<dbReference type="EMBL" id="X63196">
    <property type="protein sequence ID" value="CAA44880.1"/>
    <property type="molecule type" value="Genomic_DNA"/>
</dbReference>
<dbReference type="PIR" id="S04848">
    <property type="entry name" value="S04848"/>
</dbReference>
<dbReference type="SMR" id="P0CY59"/>
<dbReference type="GO" id="GO:0000428">
    <property type="term" value="C:DNA-directed RNA polymerase complex"/>
    <property type="evidence" value="ECO:0007669"/>
    <property type="project" value="UniProtKB-KW"/>
</dbReference>
<dbReference type="GO" id="GO:0003677">
    <property type="term" value="F:DNA binding"/>
    <property type="evidence" value="ECO:0007669"/>
    <property type="project" value="UniProtKB-KW"/>
</dbReference>
<dbReference type="GO" id="GO:0001216">
    <property type="term" value="F:DNA-binding transcription activator activity"/>
    <property type="evidence" value="ECO:0007669"/>
    <property type="project" value="InterPro"/>
</dbReference>
<dbReference type="GO" id="GO:0016779">
    <property type="term" value="F:nucleotidyltransferase activity"/>
    <property type="evidence" value="ECO:0007669"/>
    <property type="project" value="UniProtKB-KW"/>
</dbReference>
<dbReference type="GO" id="GO:0016987">
    <property type="term" value="F:sigma factor activity"/>
    <property type="evidence" value="ECO:0007669"/>
    <property type="project" value="UniProtKB-KW"/>
</dbReference>
<dbReference type="GO" id="GO:0006352">
    <property type="term" value="P:DNA-templated transcription initiation"/>
    <property type="evidence" value="ECO:0007669"/>
    <property type="project" value="InterPro"/>
</dbReference>
<dbReference type="GO" id="GO:0009399">
    <property type="term" value="P:nitrogen fixation"/>
    <property type="evidence" value="ECO:0007669"/>
    <property type="project" value="UniProtKB-KW"/>
</dbReference>
<dbReference type="Gene3D" id="1.10.10.60">
    <property type="entry name" value="Homeodomain-like"/>
    <property type="match status" value="1"/>
</dbReference>
<dbReference type="Gene3D" id="1.10.10.1330">
    <property type="entry name" value="RNA polymerase sigma-54 factor, core-binding domain"/>
    <property type="match status" value="1"/>
</dbReference>
<dbReference type="InterPro" id="IPR000394">
    <property type="entry name" value="RNA_pol_sigma_54"/>
</dbReference>
<dbReference type="InterPro" id="IPR007046">
    <property type="entry name" value="RNA_pol_sigma_54_core-bd"/>
</dbReference>
<dbReference type="InterPro" id="IPR007634">
    <property type="entry name" value="RNA_pol_sigma_54_DNA-bd"/>
</dbReference>
<dbReference type="InterPro" id="IPR038709">
    <property type="entry name" value="RpoN_core-bd_sf"/>
</dbReference>
<dbReference type="NCBIfam" id="TIGR02395">
    <property type="entry name" value="rpoN_sigma"/>
    <property type="match status" value="1"/>
</dbReference>
<dbReference type="PANTHER" id="PTHR32248">
    <property type="entry name" value="RNA POLYMERASE SIGMA-54 FACTOR"/>
    <property type="match status" value="1"/>
</dbReference>
<dbReference type="PANTHER" id="PTHR32248:SF4">
    <property type="entry name" value="RNA POLYMERASE SIGMA-54 FACTOR"/>
    <property type="match status" value="1"/>
</dbReference>
<dbReference type="Pfam" id="PF00309">
    <property type="entry name" value="Sigma54_AID"/>
    <property type="match status" value="1"/>
</dbReference>
<dbReference type="Pfam" id="PF04963">
    <property type="entry name" value="Sigma54_CBD"/>
    <property type="match status" value="1"/>
</dbReference>
<dbReference type="Pfam" id="PF04552">
    <property type="entry name" value="Sigma54_DBD"/>
    <property type="match status" value="1"/>
</dbReference>
<dbReference type="PIRSF" id="PIRSF000774">
    <property type="entry name" value="RpoN"/>
    <property type="match status" value="1"/>
</dbReference>
<dbReference type="PRINTS" id="PR00045">
    <property type="entry name" value="SIGMA54FCT"/>
</dbReference>
<dbReference type="PROSITE" id="PS00717">
    <property type="entry name" value="SIGMA54_1"/>
    <property type="match status" value="1"/>
</dbReference>
<dbReference type="PROSITE" id="PS00718">
    <property type="entry name" value="SIGMA54_2"/>
    <property type="match status" value="1"/>
</dbReference>
<dbReference type="PROSITE" id="PS50044">
    <property type="entry name" value="SIGMA54_3"/>
    <property type="match status" value="1"/>
</dbReference>
<keyword id="KW-0238">DNA-binding</keyword>
<keyword id="KW-0240">DNA-directed RNA polymerase</keyword>
<keyword id="KW-0535">Nitrogen fixation</keyword>
<keyword id="KW-0548">Nucleotidyltransferase</keyword>
<keyword id="KW-0731">Sigma factor</keyword>
<keyword id="KW-0804">Transcription</keyword>
<keyword id="KW-0805">Transcription regulation</keyword>
<keyword id="KW-0808">Transferase</keyword>
<comment type="function">
    <text>Sigma factors are initiation factors that promote the attachment of RNA polymerase to specific initiation sites and are then released. This sigma factor is responsible for the expression of the nitrogen fixation genes. The open complex (sigma-54 and core RNA polymerase) serves as the receptor for receipt of the melting signal from the remotely bound activator protein nifA for the expression of the nitrogen fixation proteins.</text>
</comment>
<comment type="similarity">
    <text evidence="3">Belongs to the sigma-54 factor family.</text>
</comment>
<organism>
    <name type="scientific">Rhodobacter capsulatus</name>
    <name type="common">Rhodopseudomonas capsulata</name>
    <dbReference type="NCBI Taxonomy" id="1061"/>
    <lineage>
        <taxon>Bacteria</taxon>
        <taxon>Pseudomonadati</taxon>
        <taxon>Pseudomonadota</taxon>
        <taxon>Alphaproteobacteria</taxon>
        <taxon>Rhodobacterales</taxon>
        <taxon>Rhodobacter group</taxon>
        <taxon>Rhodobacter</taxon>
    </lineage>
</organism>
<feature type="chain" id="PRO_0000205541" description="RNA polymerase sigma-54 factor">
    <location>
        <begin position="1"/>
        <end position="426"/>
    </location>
</feature>
<feature type="DNA-binding region" description="H-T-H motif" evidence="1">
    <location>
        <begin position="312"/>
        <end position="331"/>
    </location>
</feature>
<feature type="region of interest" description="Disordered" evidence="2">
    <location>
        <begin position="257"/>
        <end position="278"/>
    </location>
</feature>
<feature type="short sequence motif" description="RPON box">
    <location>
        <begin position="400"/>
        <end position="408"/>
    </location>
</feature>
<name>RP54_RHOCA</name>